<organism>
    <name type="scientific">Bacillus subtilis (strain 168)</name>
    <dbReference type="NCBI Taxonomy" id="224308"/>
    <lineage>
        <taxon>Bacteria</taxon>
        <taxon>Bacillati</taxon>
        <taxon>Bacillota</taxon>
        <taxon>Bacilli</taxon>
        <taxon>Bacillales</taxon>
        <taxon>Bacillaceae</taxon>
        <taxon>Bacillus</taxon>
    </lineage>
</organism>
<dbReference type="EC" id="2.7.1.-"/>
<dbReference type="EMBL" id="AL009126">
    <property type="protein sequence ID" value="CAB11944.3"/>
    <property type="molecule type" value="Genomic_DNA"/>
</dbReference>
<dbReference type="RefSeq" id="WP_003234968.1">
    <property type="nucleotide sequence ID" value="NZ_OZ025638.1"/>
</dbReference>
<dbReference type="SMR" id="Q797S1"/>
<dbReference type="FunCoup" id="Q797S1">
    <property type="interactions" value="89"/>
</dbReference>
<dbReference type="STRING" id="224308.BSU01680"/>
<dbReference type="PaxDb" id="224308-BSU01680"/>
<dbReference type="EnsemblBacteria" id="CAB11944">
    <property type="protein sequence ID" value="CAB11944"/>
    <property type="gene ID" value="BSU_01680"/>
</dbReference>
<dbReference type="GeneID" id="938879"/>
<dbReference type="KEGG" id="bsu:BSU01680"/>
<dbReference type="PATRIC" id="fig|224308.179.peg.174"/>
<dbReference type="eggNOG" id="COG1263">
    <property type="taxonomic scope" value="Bacteria"/>
</dbReference>
<dbReference type="eggNOG" id="COG1264">
    <property type="taxonomic scope" value="Bacteria"/>
</dbReference>
<dbReference type="InParanoid" id="Q797S1"/>
<dbReference type="OrthoDB" id="9769191at2"/>
<dbReference type="PhylomeDB" id="Q797S1"/>
<dbReference type="BioCyc" id="BSUB:BSU01680-MONOMER"/>
<dbReference type="Proteomes" id="UP000001570">
    <property type="component" value="Chromosome"/>
</dbReference>
<dbReference type="GO" id="GO:0005886">
    <property type="term" value="C:plasma membrane"/>
    <property type="evidence" value="ECO:0000318"/>
    <property type="project" value="GO_Central"/>
</dbReference>
<dbReference type="GO" id="GO:0016301">
    <property type="term" value="F:kinase activity"/>
    <property type="evidence" value="ECO:0007669"/>
    <property type="project" value="UniProtKB-KW"/>
</dbReference>
<dbReference type="GO" id="GO:0008982">
    <property type="term" value="F:protein-N(PI)-phosphohistidine-sugar phosphotransferase activity"/>
    <property type="evidence" value="ECO:0007669"/>
    <property type="project" value="InterPro"/>
</dbReference>
<dbReference type="GO" id="GO:0090588">
    <property type="term" value="F:protein-phosphocysteine-N-acetylmuramate phosphotransferase system transporter activity"/>
    <property type="evidence" value="ECO:0000318"/>
    <property type="project" value="GO_Central"/>
</dbReference>
<dbReference type="GO" id="GO:0009401">
    <property type="term" value="P:phosphoenolpyruvate-dependent sugar phosphotransferase system"/>
    <property type="evidence" value="ECO:0000318"/>
    <property type="project" value="GO_Central"/>
</dbReference>
<dbReference type="CDD" id="cd00212">
    <property type="entry name" value="PTS_IIB_glc"/>
    <property type="match status" value="1"/>
</dbReference>
<dbReference type="FunFam" id="3.30.1360.60:FF:000001">
    <property type="entry name" value="PTS system glucose-specific IIBC component PtsG"/>
    <property type="match status" value="1"/>
</dbReference>
<dbReference type="Gene3D" id="3.30.1360.60">
    <property type="entry name" value="Glucose permease domain IIB"/>
    <property type="match status" value="1"/>
</dbReference>
<dbReference type="InterPro" id="IPR036878">
    <property type="entry name" value="Glu_permease_IIB"/>
</dbReference>
<dbReference type="InterPro" id="IPR018113">
    <property type="entry name" value="PTrfase_EIIB_Cys"/>
</dbReference>
<dbReference type="InterPro" id="IPR003352">
    <property type="entry name" value="PTS_EIIC"/>
</dbReference>
<dbReference type="InterPro" id="IPR013013">
    <property type="entry name" value="PTS_EIIC_1"/>
</dbReference>
<dbReference type="InterPro" id="IPR001996">
    <property type="entry name" value="PTS_IIB_1"/>
</dbReference>
<dbReference type="InterPro" id="IPR050558">
    <property type="entry name" value="PTS_Sugar-Specific_Components"/>
</dbReference>
<dbReference type="PANTHER" id="PTHR30175">
    <property type="entry name" value="PHOSPHOTRANSFERASE SYSTEM TRANSPORT PROTEIN"/>
    <property type="match status" value="1"/>
</dbReference>
<dbReference type="PANTHER" id="PTHR30175:SF3">
    <property type="entry name" value="PTS SYSTEM N-ACETYLMURAMIC ACID-SPECIFIC EIIBC COMPONENT"/>
    <property type="match status" value="1"/>
</dbReference>
<dbReference type="Pfam" id="PF00367">
    <property type="entry name" value="PTS_EIIB"/>
    <property type="match status" value="1"/>
</dbReference>
<dbReference type="Pfam" id="PF02378">
    <property type="entry name" value="PTS_EIIC"/>
    <property type="match status" value="1"/>
</dbReference>
<dbReference type="SUPFAM" id="SSF55604">
    <property type="entry name" value="Glucose permease domain IIB"/>
    <property type="match status" value="1"/>
</dbReference>
<dbReference type="PROSITE" id="PS51098">
    <property type="entry name" value="PTS_EIIB_TYPE_1"/>
    <property type="match status" value="1"/>
</dbReference>
<dbReference type="PROSITE" id="PS51103">
    <property type="entry name" value="PTS_EIIC_TYPE_1"/>
    <property type="match status" value="1"/>
</dbReference>
<name>PTXBC_BACSU</name>
<accession>Q797S1</accession>
<reference key="1">
    <citation type="journal article" date="1997" name="Nature">
        <title>The complete genome sequence of the Gram-positive bacterium Bacillus subtilis.</title>
        <authorList>
            <person name="Kunst F."/>
            <person name="Ogasawara N."/>
            <person name="Moszer I."/>
            <person name="Albertini A.M."/>
            <person name="Alloni G."/>
            <person name="Azevedo V."/>
            <person name="Bertero M.G."/>
            <person name="Bessieres P."/>
            <person name="Bolotin A."/>
            <person name="Borchert S."/>
            <person name="Borriss R."/>
            <person name="Boursier L."/>
            <person name="Brans A."/>
            <person name="Braun M."/>
            <person name="Brignell S.C."/>
            <person name="Bron S."/>
            <person name="Brouillet S."/>
            <person name="Bruschi C.V."/>
            <person name="Caldwell B."/>
            <person name="Capuano V."/>
            <person name="Carter N.M."/>
            <person name="Choi S.-K."/>
            <person name="Codani J.-J."/>
            <person name="Connerton I.F."/>
            <person name="Cummings N.J."/>
            <person name="Daniel R.A."/>
            <person name="Denizot F."/>
            <person name="Devine K.M."/>
            <person name="Duesterhoeft A."/>
            <person name="Ehrlich S.D."/>
            <person name="Emmerson P.T."/>
            <person name="Entian K.-D."/>
            <person name="Errington J."/>
            <person name="Fabret C."/>
            <person name="Ferrari E."/>
            <person name="Foulger D."/>
            <person name="Fritz C."/>
            <person name="Fujita M."/>
            <person name="Fujita Y."/>
            <person name="Fuma S."/>
            <person name="Galizzi A."/>
            <person name="Galleron N."/>
            <person name="Ghim S.-Y."/>
            <person name="Glaser P."/>
            <person name="Goffeau A."/>
            <person name="Golightly E.J."/>
            <person name="Grandi G."/>
            <person name="Guiseppi G."/>
            <person name="Guy B.J."/>
            <person name="Haga K."/>
            <person name="Haiech J."/>
            <person name="Harwood C.R."/>
            <person name="Henaut A."/>
            <person name="Hilbert H."/>
            <person name="Holsappel S."/>
            <person name="Hosono S."/>
            <person name="Hullo M.-F."/>
            <person name="Itaya M."/>
            <person name="Jones L.-M."/>
            <person name="Joris B."/>
            <person name="Karamata D."/>
            <person name="Kasahara Y."/>
            <person name="Klaerr-Blanchard M."/>
            <person name="Klein C."/>
            <person name="Kobayashi Y."/>
            <person name="Koetter P."/>
            <person name="Koningstein G."/>
            <person name="Krogh S."/>
            <person name="Kumano M."/>
            <person name="Kurita K."/>
            <person name="Lapidus A."/>
            <person name="Lardinois S."/>
            <person name="Lauber J."/>
            <person name="Lazarevic V."/>
            <person name="Lee S.-M."/>
            <person name="Levine A."/>
            <person name="Liu H."/>
            <person name="Masuda S."/>
            <person name="Mauel C."/>
            <person name="Medigue C."/>
            <person name="Medina N."/>
            <person name="Mellado R.P."/>
            <person name="Mizuno M."/>
            <person name="Moestl D."/>
            <person name="Nakai S."/>
            <person name="Noback M."/>
            <person name="Noone D."/>
            <person name="O'Reilly M."/>
            <person name="Ogawa K."/>
            <person name="Ogiwara A."/>
            <person name="Oudega B."/>
            <person name="Park S.-H."/>
            <person name="Parro V."/>
            <person name="Pohl T.M."/>
            <person name="Portetelle D."/>
            <person name="Porwollik S."/>
            <person name="Prescott A.M."/>
            <person name="Presecan E."/>
            <person name="Pujic P."/>
            <person name="Purnelle B."/>
            <person name="Rapoport G."/>
            <person name="Rey M."/>
            <person name="Reynolds S."/>
            <person name="Rieger M."/>
            <person name="Rivolta C."/>
            <person name="Rocha E."/>
            <person name="Roche B."/>
            <person name="Rose M."/>
            <person name="Sadaie Y."/>
            <person name="Sato T."/>
            <person name="Scanlan E."/>
            <person name="Schleich S."/>
            <person name="Schroeter R."/>
            <person name="Scoffone F."/>
            <person name="Sekiguchi J."/>
            <person name="Sekowska A."/>
            <person name="Seror S.J."/>
            <person name="Serror P."/>
            <person name="Shin B.-S."/>
            <person name="Soldo B."/>
            <person name="Sorokin A."/>
            <person name="Tacconi E."/>
            <person name="Takagi T."/>
            <person name="Takahashi H."/>
            <person name="Takemaru K."/>
            <person name="Takeuchi M."/>
            <person name="Tamakoshi A."/>
            <person name="Tanaka T."/>
            <person name="Terpstra P."/>
            <person name="Tognoni A."/>
            <person name="Tosato V."/>
            <person name="Uchiyama S."/>
            <person name="Vandenbol M."/>
            <person name="Vannier F."/>
            <person name="Vassarotti A."/>
            <person name="Viari A."/>
            <person name="Wambutt R."/>
            <person name="Wedler E."/>
            <person name="Wedler H."/>
            <person name="Weitzenegger T."/>
            <person name="Winters P."/>
            <person name="Wipat A."/>
            <person name="Yamamoto H."/>
            <person name="Yamane K."/>
            <person name="Yasumoto K."/>
            <person name="Yata K."/>
            <person name="Yoshida K."/>
            <person name="Yoshikawa H.-F."/>
            <person name="Zumstein E."/>
            <person name="Yoshikawa H."/>
            <person name="Danchin A."/>
        </authorList>
    </citation>
    <scope>NUCLEOTIDE SEQUENCE [LARGE SCALE GENOMIC DNA]</scope>
    <source>
        <strain>168</strain>
    </source>
</reference>
<reference key="2">
    <citation type="journal article" date="2009" name="Microbiology">
        <title>From a consortium sequence to a unified sequence: the Bacillus subtilis 168 reference genome a decade later.</title>
        <authorList>
            <person name="Barbe V."/>
            <person name="Cruveiller S."/>
            <person name="Kunst F."/>
            <person name="Lenoble P."/>
            <person name="Meurice G."/>
            <person name="Sekowska A."/>
            <person name="Vallenet D."/>
            <person name="Wang T."/>
            <person name="Moszer I."/>
            <person name="Medigue C."/>
            <person name="Danchin A."/>
        </authorList>
    </citation>
    <scope>SEQUENCE REVISION TO 275 AND 312</scope>
</reference>
<proteinExistence type="inferred from homology"/>
<gene>
    <name type="primary">ybbF</name>
    <name type="ordered locus">BSU01680</name>
</gene>
<evidence type="ECO:0000250" key="1"/>
<evidence type="ECO:0000255" key="2">
    <source>
        <dbReference type="PROSITE-ProRule" id="PRU00421"/>
    </source>
</evidence>
<evidence type="ECO:0000255" key="3">
    <source>
        <dbReference type="PROSITE-ProRule" id="PRU00426"/>
    </source>
</evidence>
<sequence length="455" mass="47600">MSKENNYHHLAQKILELCGGKSNISSYTHCMTRLRITPYDESKADAQALRKLDGVLGVVEAETLQIILGTGVVNHVTAAFSKLVSAEEGADVKEAAAKKKADINRKNATPFKLFLRKIASIFIPLIPALVASGLITGITKAIIQAGWLSADSQIAIILTVIGSGLFTYLGILVGINASKEFGGTPALGALAGILIINPEIAKISLFGEELLPGRGGLIGVLFAAIFIAYTEQFIRRFIPQSLDIIVTPTVSLLITGIVTYVVFMPLGGFISDAITSGLLSILDIGGIAAGFILGATFLPLVVTGLHQGLTPVHMELINSIGNDPLLPILAMGGAGQVGAAFAVFVKTKKTTLRKAIAGGLPSGLLGIGEPLIFGVTLPLGRPFLTACLGAGIGGAFQAYFQVATIAIGVSGLPLSFLVLPSQIILYIVGLFISYAAGFLLTYAFGYKDEMASQFD</sequence>
<keyword id="KW-1003">Cell membrane</keyword>
<keyword id="KW-0418">Kinase</keyword>
<keyword id="KW-0472">Membrane</keyword>
<keyword id="KW-0598">Phosphotransferase system</keyword>
<keyword id="KW-1185">Reference proteome</keyword>
<keyword id="KW-0762">Sugar transport</keyword>
<keyword id="KW-0808">Transferase</keyword>
<keyword id="KW-0812">Transmembrane</keyword>
<keyword id="KW-1133">Transmembrane helix</keyword>
<keyword id="KW-0813">Transport</keyword>
<protein>
    <recommendedName>
        <fullName>Putative PTS system EIIBC component YbbF</fullName>
    </recommendedName>
    <domain>
        <recommendedName>
            <fullName>Phosphotransferase enzyme IIB component</fullName>
            <ecNumber>2.7.1.-</ecNumber>
        </recommendedName>
        <alternativeName>
            <fullName>PTS system EIIB component</fullName>
        </alternativeName>
    </domain>
    <domain>
        <recommendedName>
            <fullName>Permease IIC component</fullName>
        </recommendedName>
        <alternativeName>
            <fullName>PTS system EIIC component</fullName>
        </alternativeName>
    </domain>
</protein>
<feature type="chain" id="PRO_0000376082" description="Putative PTS system EIIBC component YbbF">
    <location>
        <begin position="1"/>
        <end position="455"/>
    </location>
</feature>
<feature type="transmembrane region" description="Helical" evidence="3">
    <location>
        <begin position="118"/>
        <end position="138"/>
    </location>
</feature>
<feature type="transmembrane region" description="Helical" evidence="3">
    <location>
        <begin position="154"/>
        <end position="174"/>
    </location>
</feature>
<feature type="transmembrane region" description="Helical" evidence="3">
    <location>
        <begin position="181"/>
        <end position="201"/>
    </location>
</feature>
<feature type="transmembrane region" description="Helical" evidence="3">
    <location>
        <begin position="210"/>
        <end position="230"/>
    </location>
</feature>
<feature type="transmembrane region" description="Helical" evidence="3">
    <location>
        <begin position="250"/>
        <end position="270"/>
    </location>
</feature>
<feature type="transmembrane region" description="Helical" evidence="3">
    <location>
        <begin position="281"/>
        <end position="301"/>
    </location>
</feature>
<feature type="transmembrane region" description="Helical" evidence="3">
    <location>
        <begin position="325"/>
        <end position="345"/>
    </location>
</feature>
<feature type="transmembrane region" description="Helical" evidence="3">
    <location>
        <begin position="355"/>
        <end position="375"/>
    </location>
</feature>
<feature type="transmembrane region" description="Helical" evidence="3">
    <location>
        <begin position="399"/>
        <end position="419"/>
    </location>
</feature>
<feature type="transmembrane region" description="Helical" evidence="3">
    <location>
        <begin position="423"/>
        <end position="443"/>
    </location>
</feature>
<feature type="domain" description="PTS EIIB type-1" evidence="2">
    <location>
        <begin position="8"/>
        <end position="90"/>
    </location>
</feature>
<feature type="domain" description="PTS EIIC type-1" evidence="3">
    <location>
        <begin position="116"/>
        <end position="455"/>
    </location>
</feature>
<feature type="active site" description="Phosphocysteine intermediate; for EIIB activity" evidence="2">
    <location>
        <position position="30"/>
    </location>
</feature>
<comment type="function">
    <text evidence="1">The phosphoenolpyruvate-dependent sugar phosphotransferase system (sugar PTS), a major carbohydrate active -transport system, catalyzes the phosphorylation of incoming sugar substrates concomitantly with their translocation across the cell membrane.</text>
</comment>
<comment type="subcellular location">
    <subcellularLocation>
        <location evidence="3">Cell membrane</location>
        <topology evidence="3">Multi-pass membrane protein</topology>
    </subcellularLocation>
</comment>
<comment type="domain">
    <text>The EIIB domain is phosphorylated by phospho-EIIA on a cysteinyl or histidyl residue, depending on the transported sugar. Then, it transfers the phosphoryl group to the sugar substrate concomitantly with the sugar uptake processed by the EIIC domain.</text>
</comment>
<comment type="domain">
    <text>The EIIC domain forms the PTS system translocation channel and contains the specific substrate-binding site.</text>
</comment>